<organism>
    <name type="scientific">Rattus norvegicus</name>
    <name type="common">Rat</name>
    <dbReference type="NCBI Taxonomy" id="10116"/>
    <lineage>
        <taxon>Eukaryota</taxon>
        <taxon>Metazoa</taxon>
        <taxon>Chordata</taxon>
        <taxon>Craniata</taxon>
        <taxon>Vertebrata</taxon>
        <taxon>Euteleostomi</taxon>
        <taxon>Mammalia</taxon>
        <taxon>Eutheria</taxon>
        <taxon>Euarchontoglires</taxon>
        <taxon>Glires</taxon>
        <taxon>Rodentia</taxon>
        <taxon>Myomorpha</taxon>
        <taxon>Muroidea</taxon>
        <taxon>Muridae</taxon>
        <taxon>Murinae</taxon>
        <taxon>Rattus</taxon>
    </lineage>
</organism>
<sequence length="622" mass="69153">MRRDVRILLLGEAQVGKTSLILSLVGEEFPEEVPARAEEITIPADVTPEKVPTHIVDYSEAEQTEEELQEEIHKANVVCVVYDVSEEATIEKIRTKWIPLVNGRTATGPRLPIILVGNKSDLRPGSTIEAVLPIMSQFPEIETCVECSAKHLRNISELFYYAQKAVLHPTAPLYDPEAKQLRPACAQALTRIFRLSDQDLDHALSDKELNAFQKSCFGHPLAPQALEDVKRVVCKNVAGGVQDDRLTLEGFLFLNTLFIQRGRHETTWTILRRFGYSDSLELTPDYLCPPLYVPPGCSTELNHRGYQFVQRVFEKHDQDHDGVLSPTELESLFSVFSVAPWGPELLHTVPTEAGCLSLRGYLCQWTLVTYLDVQHCLAHLGYLGYPTLCEQDSQAQAITVTREKRLDQEKGQTQRSVLMCKVLGARGVGKSAFLQAFLGHSLGEARDRDAPEKLPTHTINTVRVSGQEKYLILCEVNADSLLDTSLDTTCDVACLMFDSSDPETFVQCATIYKRYYMDGQTPCLFISSKADLPEGVAPPGLSPAEFCRRHRLPAPASFSCLGPAQSSIDVFTQLATMATFPHLAHTELHPTPFWLRGVLVAVGTAVAAVLSFSLYRVLVKSR</sequence>
<evidence type="ECO:0000250" key="1">
    <source>
        <dbReference type="UniProtKB" id="Q8IXI1"/>
    </source>
</evidence>
<evidence type="ECO:0000250" key="2">
    <source>
        <dbReference type="UniProtKB" id="Q8IXI2"/>
    </source>
</evidence>
<evidence type="ECO:0000250" key="3">
    <source>
        <dbReference type="UniProtKB" id="Q8JZN7"/>
    </source>
</evidence>
<evidence type="ECO:0000255" key="4"/>
<evidence type="ECO:0000255" key="5">
    <source>
        <dbReference type="PROSITE-ProRule" id="PRU00448"/>
    </source>
</evidence>
<evidence type="ECO:0000255" key="6">
    <source>
        <dbReference type="PROSITE-ProRule" id="PRU00757"/>
    </source>
</evidence>
<evidence type="ECO:0000269" key="7">
    <source>
    </source>
</evidence>
<evidence type="ECO:0000305" key="8"/>
<name>MIRO2_RAT</name>
<accession>Q7TSA0</accession>
<gene>
    <name type="primary">Rhot2</name>
    <name type="synonym">Arht2</name>
</gene>
<keyword id="KW-0106">Calcium</keyword>
<keyword id="KW-0342">GTP-binding</keyword>
<keyword id="KW-0378">Hydrolase</keyword>
<keyword id="KW-1017">Isopeptide bond</keyword>
<keyword id="KW-0460">Magnesium</keyword>
<keyword id="KW-0472">Membrane</keyword>
<keyword id="KW-0479">Metal-binding</keyword>
<keyword id="KW-0496">Mitochondrion</keyword>
<keyword id="KW-1000">Mitochondrion outer membrane</keyword>
<keyword id="KW-0547">Nucleotide-binding</keyword>
<keyword id="KW-1185">Reference proteome</keyword>
<keyword id="KW-0677">Repeat</keyword>
<keyword id="KW-0812">Transmembrane</keyword>
<keyword id="KW-1133">Transmembrane helix</keyword>
<keyword id="KW-0832">Ubl conjugation</keyword>
<reference key="1">
    <citation type="journal article" date="2004" name="Cytogenet. Genome Res.">
        <title>Cloning and characterization of the mouse Arht2 gene which encodes a putative atypical GTPase.</title>
        <authorList>
            <person name="Shan Y."/>
            <person name="Hexige S."/>
            <person name="Guo Z."/>
            <person name="Wan B."/>
            <person name="Chen K."/>
            <person name="Chen X."/>
            <person name="Ma L."/>
            <person name="Huang C."/>
            <person name="Zhao S."/>
            <person name="Yu L."/>
        </authorList>
    </citation>
    <scope>NUCLEOTIDE SEQUENCE [MRNA]</scope>
</reference>
<reference key="2">
    <citation type="journal article" date="2014" name="Cell">
        <title>Glucose regulates mitochondrial motility via Milton modification by O-GlcNAc transferase.</title>
        <authorList>
            <person name="Pekkurnaz G."/>
            <person name="Trinidad J.C."/>
            <person name="Wang X."/>
            <person name="Kong D."/>
            <person name="Schwarz T.L."/>
        </authorList>
    </citation>
    <scope>INTERACTION WITH KIF5B; OGT; RHOT1 AND TRAK1</scope>
</reference>
<proteinExistence type="evidence at protein level"/>
<comment type="function">
    <text evidence="1 2">Atypical mitochondrial nucleoside-triphosphatase (NTPase) involved in mitochondrial trafficking. Probably involved in control of anterograde transport of mitochondria and their subcellular distribution. Can hydrolyze GTP, ATP and UTP (By similarity).</text>
</comment>
<comment type="catalytic activity">
    <reaction evidence="2">
        <text>GTP + H2O = GDP + phosphate + H(+)</text>
        <dbReference type="Rhea" id="RHEA:19669"/>
        <dbReference type="ChEBI" id="CHEBI:15377"/>
        <dbReference type="ChEBI" id="CHEBI:15378"/>
        <dbReference type="ChEBI" id="CHEBI:37565"/>
        <dbReference type="ChEBI" id="CHEBI:43474"/>
        <dbReference type="ChEBI" id="CHEBI:58189"/>
    </reaction>
    <physiologicalReaction direction="left-to-right" evidence="2">
        <dbReference type="Rhea" id="RHEA:19670"/>
    </physiologicalReaction>
</comment>
<comment type="catalytic activity">
    <reaction evidence="1">
        <text>ATP + H2O = ADP + phosphate + H(+)</text>
        <dbReference type="Rhea" id="RHEA:13065"/>
        <dbReference type="ChEBI" id="CHEBI:15377"/>
        <dbReference type="ChEBI" id="CHEBI:15378"/>
        <dbReference type="ChEBI" id="CHEBI:30616"/>
        <dbReference type="ChEBI" id="CHEBI:43474"/>
        <dbReference type="ChEBI" id="CHEBI:456216"/>
    </reaction>
    <physiologicalReaction direction="left-to-right" evidence="1">
        <dbReference type="Rhea" id="RHEA:13066"/>
    </physiologicalReaction>
</comment>
<comment type="catalytic activity">
    <reaction evidence="1">
        <text>UTP + H2O = UDP + phosphate + H(+)</text>
        <dbReference type="Rhea" id="RHEA:64900"/>
        <dbReference type="ChEBI" id="CHEBI:15377"/>
        <dbReference type="ChEBI" id="CHEBI:15378"/>
        <dbReference type="ChEBI" id="CHEBI:43474"/>
        <dbReference type="ChEBI" id="CHEBI:46398"/>
        <dbReference type="ChEBI" id="CHEBI:58223"/>
    </reaction>
    <physiologicalReaction direction="left-to-right" evidence="1">
        <dbReference type="Rhea" id="RHEA:64901"/>
    </physiologicalReaction>
</comment>
<comment type="subunit">
    <text evidence="1 3 7">Homodimer (By similarity). Interacts with the kinesin-binding proteins TRAK1/OIP106 and TRAK2/GRIF1, forming a link between mitochondria and the trafficking apparatus of the microtubules (By similarity). Interacts with ARMCX3 (By similarity). Found in a complex with KIF5B, OGT, RHOT1 and TRAK1 (PubMed:24995978).</text>
</comment>
<comment type="subcellular location">
    <subcellularLocation>
        <location evidence="1">Mitochondrion outer membrane</location>
        <topology evidence="1">Single-pass type IV membrane protein</topology>
    </subcellularLocation>
    <text evidence="1">Colocalizes with MGARP and RHOT2 at the mitochondria.</text>
</comment>
<comment type="domain">
    <text evidence="1">The Miro 2 domain is necessary for efficient ubiquitination by PRKN.</text>
</comment>
<comment type="PTM">
    <text evidence="1">Ubiquitinated by PRKN in a PINK1-dependent manner, leading to its degradation.</text>
</comment>
<comment type="similarity">
    <text evidence="6 8">Belongs to the mitochondrial Rho GTPase family.</text>
</comment>
<feature type="chain" id="PRO_0000239321" description="Mitochondrial Rho GTPase 2">
    <location>
        <begin position="1"/>
        <end position="622"/>
    </location>
</feature>
<feature type="topological domain" description="Cytoplasmic" evidence="4">
    <location>
        <begin position="1"/>
        <end position="596"/>
    </location>
</feature>
<feature type="transmembrane region" description="Helical; Anchor for type IV membrane protein" evidence="4">
    <location>
        <begin position="597"/>
        <end position="619"/>
    </location>
</feature>
<feature type="topological domain" description="Mitochondrial intermembrane" evidence="4">
    <location>
        <begin position="620"/>
        <end position="622"/>
    </location>
</feature>
<feature type="domain" description="Miro 1" evidence="6">
    <location>
        <begin position="2"/>
        <end position="168"/>
    </location>
</feature>
<feature type="domain" description="EF-hand 1" evidence="5">
    <location>
        <begin position="184"/>
        <end position="219"/>
    </location>
</feature>
<feature type="domain" description="EF-hand 2" evidence="5">
    <location>
        <begin position="304"/>
        <end position="339"/>
    </location>
</feature>
<feature type="domain" description="Miro 2" evidence="6">
    <location>
        <begin position="415"/>
        <end position="580"/>
    </location>
</feature>
<feature type="binding site" evidence="2">
    <location>
        <position position="16"/>
    </location>
    <ligand>
        <name>GTP</name>
        <dbReference type="ChEBI" id="CHEBI:37565"/>
        <label>1</label>
    </ligand>
</feature>
<feature type="binding site" evidence="2">
    <location>
        <position position="17"/>
    </location>
    <ligand>
        <name>GTP</name>
        <dbReference type="ChEBI" id="CHEBI:37565"/>
        <label>1</label>
    </ligand>
</feature>
<feature type="binding site" evidence="2">
    <location>
        <position position="18"/>
    </location>
    <ligand>
        <name>GTP</name>
        <dbReference type="ChEBI" id="CHEBI:37565"/>
        <label>1</label>
    </ligand>
</feature>
<feature type="binding site" evidence="2">
    <location>
        <position position="18"/>
    </location>
    <ligand>
        <name>Mg(2+)</name>
        <dbReference type="ChEBI" id="CHEBI:18420"/>
        <label>1</label>
    </ligand>
</feature>
<feature type="binding site" evidence="2">
    <location>
        <position position="19"/>
    </location>
    <ligand>
        <name>GTP</name>
        <dbReference type="ChEBI" id="CHEBI:37565"/>
        <label>1</label>
    </ligand>
</feature>
<feature type="binding site" evidence="2">
    <location>
        <position position="57"/>
    </location>
    <ligand>
        <name>Mg(2+)</name>
        <dbReference type="ChEBI" id="CHEBI:18420"/>
        <label>1</label>
    </ligand>
</feature>
<feature type="binding site" evidence="2">
    <location>
        <position position="59"/>
    </location>
    <ligand>
        <name>GTP</name>
        <dbReference type="ChEBI" id="CHEBI:37565"/>
        <label>1</label>
    </ligand>
</feature>
<feature type="binding site" evidence="2">
    <location>
        <position position="118"/>
    </location>
    <ligand>
        <name>GTP</name>
        <dbReference type="ChEBI" id="CHEBI:37565"/>
        <label>1</label>
    </ligand>
</feature>
<feature type="binding site" evidence="2">
    <location>
        <position position="119"/>
    </location>
    <ligand>
        <name>GTP</name>
        <dbReference type="ChEBI" id="CHEBI:37565"/>
        <label>1</label>
    </ligand>
</feature>
<feature type="binding site" evidence="2">
    <location>
        <position position="121"/>
    </location>
    <ligand>
        <name>GTP</name>
        <dbReference type="ChEBI" id="CHEBI:37565"/>
        <label>1</label>
    </ligand>
</feature>
<feature type="binding site" evidence="2">
    <location>
        <position position="149"/>
    </location>
    <ligand>
        <name>GTP</name>
        <dbReference type="ChEBI" id="CHEBI:37565"/>
        <label>1</label>
    </ligand>
</feature>
<feature type="binding site" evidence="2">
    <location>
        <position position="150"/>
    </location>
    <ligand>
        <name>GTP</name>
        <dbReference type="ChEBI" id="CHEBI:37565"/>
        <label>1</label>
    </ligand>
</feature>
<feature type="binding site" evidence="8">
    <location>
        <position position="197"/>
    </location>
    <ligand>
        <name>Ca(2+)</name>
        <dbReference type="ChEBI" id="CHEBI:29108"/>
        <label>1</label>
    </ligand>
</feature>
<feature type="binding site" evidence="8">
    <location>
        <position position="199"/>
    </location>
    <ligand>
        <name>Ca(2+)</name>
        <dbReference type="ChEBI" id="CHEBI:29108"/>
        <label>1</label>
    </ligand>
</feature>
<feature type="binding site" evidence="8">
    <location>
        <position position="201"/>
    </location>
    <ligand>
        <name>Ca(2+)</name>
        <dbReference type="ChEBI" id="CHEBI:29108"/>
        <label>1</label>
    </ligand>
</feature>
<feature type="binding site" evidence="8">
    <location>
        <position position="208"/>
    </location>
    <ligand>
        <name>Ca(2+)</name>
        <dbReference type="ChEBI" id="CHEBI:29108"/>
        <label>1</label>
    </ligand>
</feature>
<feature type="binding site" evidence="5">
    <location>
        <position position="317"/>
    </location>
    <ligand>
        <name>Ca(2+)</name>
        <dbReference type="ChEBI" id="CHEBI:29108"/>
        <label>2</label>
    </ligand>
</feature>
<feature type="binding site" evidence="5">
    <location>
        <position position="319"/>
    </location>
    <ligand>
        <name>Ca(2+)</name>
        <dbReference type="ChEBI" id="CHEBI:29108"/>
        <label>2</label>
    </ligand>
</feature>
<feature type="binding site" evidence="5">
    <location>
        <position position="321"/>
    </location>
    <ligand>
        <name>Ca(2+)</name>
        <dbReference type="ChEBI" id="CHEBI:29108"/>
        <label>2</label>
    </ligand>
</feature>
<feature type="binding site" evidence="5">
    <location>
        <position position="328"/>
    </location>
    <ligand>
        <name>Ca(2+)</name>
        <dbReference type="ChEBI" id="CHEBI:29108"/>
        <label>2</label>
    </ligand>
</feature>
<feature type="binding site" evidence="1">
    <location>
        <position position="427"/>
    </location>
    <ligand>
        <name>GTP</name>
        <dbReference type="ChEBI" id="CHEBI:37565"/>
        <label>2</label>
    </ligand>
</feature>
<feature type="binding site" evidence="1">
    <location>
        <position position="429"/>
    </location>
    <ligand>
        <name>GTP</name>
        <dbReference type="ChEBI" id="CHEBI:37565"/>
        <label>2</label>
    </ligand>
</feature>
<feature type="binding site" evidence="1">
    <location>
        <position position="430"/>
    </location>
    <ligand>
        <name>GTP</name>
        <dbReference type="ChEBI" id="CHEBI:37565"/>
        <label>2</label>
    </ligand>
</feature>
<feature type="binding site" evidence="1">
    <location>
        <position position="431"/>
    </location>
    <ligand>
        <name>GTP</name>
        <dbReference type="ChEBI" id="CHEBI:37565"/>
        <label>2</label>
    </ligand>
</feature>
<feature type="binding site" evidence="1">
    <location>
        <position position="431"/>
    </location>
    <ligand>
        <name>Mg(2+)</name>
        <dbReference type="ChEBI" id="CHEBI:18420"/>
        <label>2</label>
    </ligand>
</feature>
<feature type="binding site" evidence="1">
    <location>
        <position position="432"/>
    </location>
    <ligand>
        <name>GTP</name>
        <dbReference type="ChEBI" id="CHEBI:37565"/>
        <label>2</label>
    </ligand>
</feature>
<feature type="binding site" evidence="1">
    <location>
        <position position="475"/>
    </location>
    <ligand>
        <name>Mg(2+)</name>
        <dbReference type="ChEBI" id="CHEBI:18420"/>
        <label>2</label>
    </ligand>
</feature>
<feature type="binding site" evidence="1">
    <location>
        <position position="529"/>
    </location>
    <ligand>
        <name>GTP</name>
        <dbReference type="ChEBI" id="CHEBI:37565"/>
        <label>2</label>
    </ligand>
</feature>
<feature type="binding site" evidence="1">
    <location>
        <position position="531"/>
    </location>
    <ligand>
        <name>GTP</name>
        <dbReference type="ChEBI" id="CHEBI:37565"/>
        <label>2</label>
    </ligand>
</feature>
<feature type="binding site" evidence="1">
    <location>
        <position position="560"/>
    </location>
    <ligand>
        <name>GTP</name>
        <dbReference type="ChEBI" id="CHEBI:37565"/>
        <label>2</label>
    </ligand>
</feature>
<feature type="cross-link" description="Glycyl lysine isopeptide (Lys-Gly) (interchain with G-Cter in ubiquitin)" evidence="1">
    <location>
        <position position="96"/>
    </location>
</feature>
<feature type="cross-link" description="Glycyl lysine isopeptide (Lys-Gly) (interchain with G-Cter in ubiquitin)" evidence="1">
    <location>
        <position position="119"/>
    </location>
</feature>
<feature type="cross-link" description="Glycyl lysine isopeptide (Lys-Gly) (interchain with G-Cter in ubiquitin)" evidence="1">
    <location>
        <position position="164"/>
    </location>
</feature>
<dbReference type="EC" id="3.6.5.-" evidence="2"/>
<dbReference type="EMBL" id="AY303973">
    <property type="protein sequence ID" value="AAP60015.1"/>
    <property type="molecule type" value="mRNA"/>
</dbReference>
<dbReference type="RefSeq" id="NP_861544.1">
    <property type="nucleotide sequence ID" value="NM_181823.1"/>
</dbReference>
<dbReference type="RefSeq" id="XP_017452558.1">
    <property type="nucleotide sequence ID" value="XM_017597069.2"/>
</dbReference>
<dbReference type="SMR" id="Q7TSA0"/>
<dbReference type="BioGRID" id="252047">
    <property type="interactions" value="1"/>
</dbReference>
<dbReference type="FunCoup" id="Q7TSA0">
    <property type="interactions" value="3005"/>
</dbReference>
<dbReference type="STRING" id="10116.ENSRNOP00000027083"/>
<dbReference type="PhosphoSitePlus" id="Q7TSA0"/>
<dbReference type="jPOST" id="Q7TSA0"/>
<dbReference type="PaxDb" id="10116-ENSRNOP00000027083"/>
<dbReference type="ABCD" id="Q7TSA0">
    <property type="antibodies" value="1 sequenced antibody"/>
</dbReference>
<dbReference type="Ensembl" id="ENSRNOT00000027083.6">
    <property type="protein sequence ID" value="ENSRNOP00000027083.3"/>
    <property type="gene ID" value="ENSRNOG00000019930.7"/>
</dbReference>
<dbReference type="GeneID" id="287156"/>
<dbReference type="KEGG" id="rno:287156"/>
<dbReference type="UCSC" id="RGD:727970">
    <property type="organism name" value="rat"/>
</dbReference>
<dbReference type="AGR" id="RGD:727970"/>
<dbReference type="CTD" id="89941"/>
<dbReference type="RGD" id="727970">
    <property type="gene designation" value="Rhot2"/>
</dbReference>
<dbReference type="eggNOG" id="KOG1707">
    <property type="taxonomic scope" value="Eukaryota"/>
</dbReference>
<dbReference type="GeneTree" id="ENSGT00940000158109"/>
<dbReference type="HOGENOM" id="CLU_014255_3_1_1"/>
<dbReference type="InParanoid" id="Q7TSA0"/>
<dbReference type="OMA" id="FWFAQKA"/>
<dbReference type="OrthoDB" id="28984at9989"/>
<dbReference type="PhylomeDB" id="Q7TSA0"/>
<dbReference type="TreeFam" id="TF300814"/>
<dbReference type="Reactome" id="R-RNO-9013419">
    <property type="pathway name" value="RHOT2 GTPase cycle"/>
</dbReference>
<dbReference type="PRO" id="PR:Q7TSA0"/>
<dbReference type="Proteomes" id="UP000002494">
    <property type="component" value="Chromosome 10"/>
</dbReference>
<dbReference type="Bgee" id="ENSRNOG00000019930">
    <property type="expression patterns" value="Expressed in stomach and 20 other cell types or tissues"/>
</dbReference>
<dbReference type="GO" id="GO:0005741">
    <property type="term" value="C:mitochondrial outer membrane"/>
    <property type="evidence" value="ECO:0000250"/>
    <property type="project" value="UniProtKB"/>
</dbReference>
<dbReference type="GO" id="GO:0005509">
    <property type="term" value="F:calcium ion binding"/>
    <property type="evidence" value="ECO:0007669"/>
    <property type="project" value="InterPro"/>
</dbReference>
<dbReference type="GO" id="GO:0005525">
    <property type="term" value="F:GTP binding"/>
    <property type="evidence" value="ECO:0000318"/>
    <property type="project" value="GO_Central"/>
</dbReference>
<dbReference type="GO" id="GO:0003924">
    <property type="term" value="F:GTPase activity"/>
    <property type="evidence" value="ECO:0000318"/>
    <property type="project" value="GO_Central"/>
</dbReference>
<dbReference type="GO" id="GO:0019725">
    <property type="term" value="P:cellular homeostasis"/>
    <property type="evidence" value="ECO:0000250"/>
    <property type="project" value="UniProtKB"/>
</dbReference>
<dbReference type="GO" id="GO:0097345">
    <property type="term" value="P:mitochondrial outer membrane permeabilization"/>
    <property type="evidence" value="ECO:0000250"/>
    <property type="project" value="UniProtKB"/>
</dbReference>
<dbReference type="GO" id="GO:0007005">
    <property type="term" value="P:mitochondrion organization"/>
    <property type="evidence" value="ECO:0000318"/>
    <property type="project" value="GO_Central"/>
</dbReference>
<dbReference type="GO" id="GO:0047497">
    <property type="term" value="P:mitochondrion transport along microtubule"/>
    <property type="evidence" value="ECO:0000250"/>
    <property type="project" value="UniProtKB"/>
</dbReference>
<dbReference type="CDD" id="cd01893">
    <property type="entry name" value="Miro1"/>
    <property type="match status" value="1"/>
</dbReference>
<dbReference type="CDD" id="cd01892">
    <property type="entry name" value="Miro2"/>
    <property type="match status" value="1"/>
</dbReference>
<dbReference type="FunFam" id="1.10.238.10:FF:000011">
    <property type="entry name" value="Mitochondrial Rho GTPase"/>
    <property type="match status" value="1"/>
</dbReference>
<dbReference type="FunFam" id="1.10.238.10:FF:000021">
    <property type="entry name" value="Mitochondrial Rho GTPase"/>
    <property type="match status" value="1"/>
</dbReference>
<dbReference type="FunFam" id="3.40.50.300:FF:000170">
    <property type="entry name" value="Mitochondrial Rho GTPase"/>
    <property type="match status" value="1"/>
</dbReference>
<dbReference type="FunFam" id="3.40.50.300:FF:001117">
    <property type="entry name" value="Mitochondrial Rho GTPase 2"/>
    <property type="match status" value="1"/>
</dbReference>
<dbReference type="Gene3D" id="1.10.238.10">
    <property type="entry name" value="EF-hand"/>
    <property type="match status" value="2"/>
</dbReference>
<dbReference type="Gene3D" id="3.40.50.300">
    <property type="entry name" value="P-loop containing nucleotide triphosphate hydrolases"/>
    <property type="match status" value="2"/>
</dbReference>
<dbReference type="InterPro" id="IPR011992">
    <property type="entry name" value="EF-hand-dom_pair"/>
</dbReference>
<dbReference type="InterPro" id="IPR018247">
    <property type="entry name" value="EF_Hand_1_Ca_BS"/>
</dbReference>
<dbReference type="InterPro" id="IPR013566">
    <property type="entry name" value="EF_hand_assoc_1"/>
</dbReference>
<dbReference type="InterPro" id="IPR013567">
    <property type="entry name" value="EF_hand_assoc_2"/>
</dbReference>
<dbReference type="InterPro" id="IPR002048">
    <property type="entry name" value="EF_hand_dom"/>
</dbReference>
<dbReference type="InterPro" id="IPR021181">
    <property type="entry name" value="Miro"/>
</dbReference>
<dbReference type="InterPro" id="IPR052266">
    <property type="entry name" value="Miro-EF-hand_domain"/>
</dbReference>
<dbReference type="InterPro" id="IPR020860">
    <property type="entry name" value="MIRO_dom"/>
</dbReference>
<dbReference type="InterPro" id="IPR027417">
    <property type="entry name" value="P-loop_NTPase"/>
</dbReference>
<dbReference type="InterPro" id="IPR001806">
    <property type="entry name" value="Small_GTPase"/>
</dbReference>
<dbReference type="PANTHER" id="PTHR46819">
    <property type="entry name" value="EF-HAND CALCIUM-BINDING DOMAIN-CONTAINING PROTEIN 7"/>
    <property type="match status" value="1"/>
</dbReference>
<dbReference type="PANTHER" id="PTHR46819:SF1">
    <property type="entry name" value="EF-HAND CALCIUM-BINDING DOMAIN-CONTAINING PROTEIN 7"/>
    <property type="match status" value="1"/>
</dbReference>
<dbReference type="Pfam" id="PF08355">
    <property type="entry name" value="EF_assoc_1"/>
    <property type="match status" value="1"/>
</dbReference>
<dbReference type="Pfam" id="PF08356">
    <property type="entry name" value="EF_assoc_2"/>
    <property type="match status" value="1"/>
</dbReference>
<dbReference type="Pfam" id="PF00071">
    <property type="entry name" value="Ras"/>
    <property type="match status" value="1"/>
</dbReference>
<dbReference type="PIRSF" id="PIRSF037488">
    <property type="entry name" value="Mt_Rho_GTPase"/>
    <property type="match status" value="1"/>
</dbReference>
<dbReference type="PRINTS" id="PR00449">
    <property type="entry name" value="RASTRNSFRMNG"/>
</dbReference>
<dbReference type="SMART" id="SM00175">
    <property type="entry name" value="RAB"/>
    <property type="match status" value="1"/>
</dbReference>
<dbReference type="SMART" id="SM00173">
    <property type="entry name" value="RAS"/>
    <property type="match status" value="1"/>
</dbReference>
<dbReference type="SMART" id="SM00174">
    <property type="entry name" value="RHO"/>
    <property type="match status" value="1"/>
</dbReference>
<dbReference type="SUPFAM" id="SSF47473">
    <property type="entry name" value="EF-hand"/>
    <property type="match status" value="1"/>
</dbReference>
<dbReference type="SUPFAM" id="SSF52540">
    <property type="entry name" value="P-loop containing nucleoside triphosphate hydrolases"/>
    <property type="match status" value="2"/>
</dbReference>
<dbReference type="PROSITE" id="PS00018">
    <property type="entry name" value="EF_HAND_1"/>
    <property type="match status" value="1"/>
</dbReference>
<dbReference type="PROSITE" id="PS50222">
    <property type="entry name" value="EF_HAND_2"/>
    <property type="match status" value="2"/>
</dbReference>
<dbReference type="PROSITE" id="PS51423">
    <property type="entry name" value="MIRO"/>
    <property type="match status" value="2"/>
</dbReference>
<protein>
    <recommendedName>
        <fullName>Mitochondrial Rho GTPase 2</fullName>
        <shortName>MIRO-2</shortName>
        <ecNumber evidence="2">3.6.5.-</ecNumber>
    </recommendedName>
    <alternativeName>
        <fullName>Ras homolog gene family member T2</fullName>
    </alternativeName>
</protein>